<comment type="catalytic activity">
    <reaction evidence="1">
        <text>D-glucose + ATP = D-glucose 6-phosphate + ADP + H(+)</text>
        <dbReference type="Rhea" id="RHEA:17825"/>
        <dbReference type="ChEBI" id="CHEBI:4167"/>
        <dbReference type="ChEBI" id="CHEBI:15378"/>
        <dbReference type="ChEBI" id="CHEBI:30616"/>
        <dbReference type="ChEBI" id="CHEBI:61548"/>
        <dbReference type="ChEBI" id="CHEBI:456216"/>
        <dbReference type="EC" id="2.7.1.2"/>
    </reaction>
</comment>
<comment type="subcellular location">
    <subcellularLocation>
        <location evidence="1">Cytoplasm</location>
    </subcellularLocation>
</comment>
<comment type="similarity">
    <text evidence="1">Belongs to the bacterial glucokinase family.</text>
</comment>
<sequence>MTAPSKPVLVADIGGTNARFALADIDASVPLLDDTCREFAVVEFGSLGEAARYYLDQIGVQATKGVFAVAGRVDGDEARITNHPWVISRSRTATMLGFSTLHLINDFAAQAMAISLLRPQDVVQVGGASWRPAPIELPRNYGVIGPGTGLGVGGLIIRNGRCFPLETEGGHVSFPPGTPEEIRVLEILSEQFGRVSNERLICGPGLVNIHRALSEIAGIDPGPLEPKDITARAAAGDPRASRTIDLFCAIFGAIAGDMVLMQGAWDGVFLTGGLVPKVLDSLQHSGFRQRFEHKGRFSAIMSRVPSLAVMHPHAGLLGAAAYAVDAERALPGEQR</sequence>
<organism>
    <name type="scientific">Xanthomonas campestris pv. campestris (strain ATCC 33913 / DSM 3586 / NCPPB 528 / LMG 568 / P 25)</name>
    <dbReference type="NCBI Taxonomy" id="190485"/>
    <lineage>
        <taxon>Bacteria</taxon>
        <taxon>Pseudomonadati</taxon>
        <taxon>Pseudomonadota</taxon>
        <taxon>Gammaproteobacteria</taxon>
        <taxon>Lysobacterales</taxon>
        <taxon>Lysobacteraceae</taxon>
        <taxon>Xanthomonas</taxon>
    </lineage>
</organism>
<feature type="chain" id="PRO_0000215142" description="Glucokinase">
    <location>
        <begin position="1"/>
        <end position="335"/>
    </location>
</feature>
<feature type="binding site" evidence="1">
    <location>
        <begin position="11"/>
        <end position="16"/>
    </location>
    <ligand>
        <name>ATP</name>
        <dbReference type="ChEBI" id="CHEBI:30616"/>
    </ligand>
</feature>
<accession>Q8P8U7</accession>
<keyword id="KW-0067">ATP-binding</keyword>
<keyword id="KW-0963">Cytoplasm</keyword>
<keyword id="KW-0324">Glycolysis</keyword>
<keyword id="KW-0418">Kinase</keyword>
<keyword id="KW-0547">Nucleotide-binding</keyword>
<keyword id="KW-1185">Reference proteome</keyword>
<keyword id="KW-0808">Transferase</keyword>
<proteinExistence type="inferred from homology"/>
<name>GLK_XANCP</name>
<gene>
    <name evidence="1" type="primary">glk</name>
    <name type="ordered locus">XCC2137</name>
</gene>
<protein>
    <recommendedName>
        <fullName evidence="1">Glucokinase</fullName>
        <ecNumber evidence="1">2.7.1.2</ecNumber>
    </recommendedName>
    <alternativeName>
        <fullName evidence="1">Glucose kinase</fullName>
    </alternativeName>
</protein>
<dbReference type="EC" id="2.7.1.2" evidence="1"/>
<dbReference type="EMBL" id="AE008922">
    <property type="protein sequence ID" value="AAM41422.1"/>
    <property type="molecule type" value="Genomic_DNA"/>
</dbReference>
<dbReference type="RefSeq" id="NP_637498.1">
    <property type="nucleotide sequence ID" value="NC_003902.1"/>
</dbReference>
<dbReference type="RefSeq" id="WP_011037288.1">
    <property type="nucleotide sequence ID" value="NC_003902.1"/>
</dbReference>
<dbReference type="SMR" id="Q8P8U7"/>
<dbReference type="STRING" id="190485.XCC2137"/>
<dbReference type="EnsemblBacteria" id="AAM41422">
    <property type="protein sequence ID" value="AAM41422"/>
    <property type="gene ID" value="XCC2137"/>
</dbReference>
<dbReference type="KEGG" id="xcc:XCC2137"/>
<dbReference type="PATRIC" id="fig|190485.4.peg.2288"/>
<dbReference type="eggNOG" id="COG0837">
    <property type="taxonomic scope" value="Bacteria"/>
</dbReference>
<dbReference type="HOGENOM" id="CLU_042582_1_0_6"/>
<dbReference type="OrthoDB" id="9800595at2"/>
<dbReference type="Proteomes" id="UP000001010">
    <property type="component" value="Chromosome"/>
</dbReference>
<dbReference type="GO" id="GO:0005829">
    <property type="term" value="C:cytosol"/>
    <property type="evidence" value="ECO:0000318"/>
    <property type="project" value="GO_Central"/>
</dbReference>
<dbReference type="GO" id="GO:0005524">
    <property type="term" value="F:ATP binding"/>
    <property type="evidence" value="ECO:0007669"/>
    <property type="project" value="UniProtKB-UniRule"/>
</dbReference>
<dbReference type="GO" id="GO:0005536">
    <property type="term" value="F:D-glucose binding"/>
    <property type="evidence" value="ECO:0007669"/>
    <property type="project" value="InterPro"/>
</dbReference>
<dbReference type="GO" id="GO:0004340">
    <property type="term" value="F:glucokinase activity"/>
    <property type="evidence" value="ECO:0000318"/>
    <property type="project" value="GO_Central"/>
</dbReference>
<dbReference type="GO" id="GO:0006096">
    <property type="term" value="P:glycolytic process"/>
    <property type="evidence" value="ECO:0007669"/>
    <property type="project" value="UniProtKB-UniRule"/>
</dbReference>
<dbReference type="CDD" id="cd24008">
    <property type="entry name" value="ASKHA_NBD_GLK"/>
    <property type="match status" value="1"/>
</dbReference>
<dbReference type="Gene3D" id="3.30.420.40">
    <property type="match status" value="1"/>
</dbReference>
<dbReference type="Gene3D" id="3.40.367.20">
    <property type="match status" value="1"/>
</dbReference>
<dbReference type="HAMAP" id="MF_00524">
    <property type="entry name" value="Glucokinase"/>
    <property type="match status" value="1"/>
</dbReference>
<dbReference type="InterPro" id="IPR043129">
    <property type="entry name" value="ATPase_NBD"/>
</dbReference>
<dbReference type="InterPro" id="IPR050201">
    <property type="entry name" value="Bacterial_glucokinase"/>
</dbReference>
<dbReference type="InterPro" id="IPR003836">
    <property type="entry name" value="Glucokinase"/>
</dbReference>
<dbReference type="NCBIfam" id="TIGR00749">
    <property type="entry name" value="glk"/>
    <property type="match status" value="1"/>
</dbReference>
<dbReference type="PANTHER" id="PTHR47690">
    <property type="entry name" value="GLUCOKINASE"/>
    <property type="match status" value="1"/>
</dbReference>
<dbReference type="PANTHER" id="PTHR47690:SF1">
    <property type="entry name" value="GLUCOKINASE"/>
    <property type="match status" value="1"/>
</dbReference>
<dbReference type="Pfam" id="PF02685">
    <property type="entry name" value="Glucokinase"/>
    <property type="match status" value="1"/>
</dbReference>
<dbReference type="SUPFAM" id="SSF53067">
    <property type="entry name" value="Actin-like ATPase domain"/>
    <property type="match status" value="1"/>
</dbReference>
<evidence type="ECO:0000255" key="1">
    <source>
        <dbReference type="HAMAP-Rule" id="MF_00524"/>
    </source>
</evidence>
<reference key="1">
    <citation type="journal article" date="2002" name="Nature">
        <title>Comparison of the genomes of two Xanthomonas pathogens with differing host specificities.</title>
        <authorList>
            <person name="da Silva A.C.R."/>
            <person name="Ferro J.A."/>
            <person name="Reinach F.C."/>
            <person name="Farah C.S."/>
            <person name="Furlan L.R."/>
            <person name="Quaggio R.B."/>
            <person name="Monteiro-Vitorello C.B."/>
            <person name="Van Sluys M.A."/>
            <person name="Almeida N.F. Jr."/>
            <person name="Alves L.M.C."/>
            <person name="do Amaral A.M."/>
            <person name="Bertolini M.C."/>
            <person name="Camargo L.E.A."/>
            <person name="Camarotte G."/>
            <person name="Cannavan F."/>
            <person name="Cardozo J."/>
            <person name="Chambergo F."/>
            <person name="Ciapina L.P."/>
            <person name="Cicarelli R.M.B."/>
            <person name="Coutinho L.L."/>
            <person name="Cursino-Santos J.R."/>
            <person name="El-Dorry H."/>
            <person name="Faria J.B."/>
            <person name="Ferreira A.J.S."/>
            <person name="Ferreira R.C.C."/>
            <person name="Ferro M.I.T."/>
            <person name="Formighieri E.F."/>
            <person name="Franco M.C."/>
            <person name="Greggio C.C."/>
            <person name="Gruber A."/>
            <person name="Katsuyama A.M."/>
            <person name="Kishi L.T."/>
            <person name="Leite R.P."/>
            <person name="Lemos E.G.M."/>
            <person name="Lemos M.V.F."/>
            <person name="Locali E.C."/>
            <person name="Machado M.A."/>
            <person name="Madeira A.M.B.N."/>
            <person name="Martinez-Rossi N.M."/>
            <person name="Martins E.C."/>
            <person name="Meidanis J."/>
            <person name="Menck C.F.M."/>
            <person name="Miyaki C.Y."/>
            <person name="Moon D.H."/>
            <person name="Moreira L.M."/>
            <person name="Novo M.T.M."/>
            <person name="Okura V.K."/>
            <person name="Oliveira M.C."/>
            <person name="Oliveira V.R."/>
            <person name="Pereira H.A."/>
            <person name="Rossi A."/>
            <person name="Sena J.A.D."/>
            <person name="Silva C."/>
            <person name="de Souza R.F."/>
            <person name="Spinola L.A.F."/>
            <person name="Takita M.A."/>
            <person name="Tamura R.E."/>
            <person name="Teixeira E.C."/>
            <person name="Tezza R.I.D."/>
            <person name="Trindade dos Santos M."/>
            <person name="Truffi D."/>
            <person name="Tsai S.M."/>
            <person name="White F.F."/>
            <person name="Setubal J.C."/>
            <person name="Kitajima J.P."/>
        </authorList>
    </citation>
    <scope>NUCLEOTIDE SEQUENCE [LARGE SCALE GENOMIC DNA]</scope>
    <source>
        <strain>ATCC 33913 / DSM 3586 / NCPPB 528 / LMG 568 / P 25</strain>
    </source>
</reference>